<keyword id="KW-0678">Repressor</keyword>
<keyword id="KW-0687">Ribonucleoprotein</keyword>
<keyword id="KW-0689">Ribosomal protein</keyword>
<keyword id="KW-0694">RNA-binding</keyword>
<keyword id="KW-0699">rRNA-binding</keyword>
<keyword id="KW-0810">Translation regulation</keyword>
<keyword id="KW-0820">tRNA-binding</keyword>
<dbReference type="EMBL" id="AP006716">
    <property type="protein sequence ID" value="BAE05780.1"/>
    <property type="molecule type" value="Genomic_DNA"/>
</dbReference>
<dbReference type="RefSeq" id="WP_011276724.1">
    <property type="nucleotide sequence ID" value="NC_007168.1"/>
</dbReference>
<dbReference type="SMR" id="Q4L3J7"/>
<dbReference type="GeneID" id="93781684"/>
<dbReference type="KEGG" id="sha:SH2471"/>
<dbReference type="eggNOG" id="COG0081">
    <property type="taxonomic scope" value="Bacteria"/>
</dbReference>
<dbReference type="HOGENOM" id="CLU_062853_0_0_9"/>
<dbReference type="OrthoDB" id="9803740at2"/>
<dbReference type="Proteomes" id="UP000000543">
    <property type="component" value="Chromosome"/>
</dbReference>
<dbReference type="GO" id="GO:0015934">
    <property type="term" value="C:large ribosomal subunit"/>
    <property type="evidence" value="ECO:0007669"/>
    <property type="project" value="InterPro"/>
</dbReference>
<dbReference type="GO" id="GO:0019843">
    <property type="term" value="F:rRNA binding"/>
    <property type="evidence" value="ECO:0007669"/>
    <property type="project" value="UniProtKB-UniRule"/>
</dbReference>
<dbReference type="GO" id="GO:0003735">
    <property type="term" value="F:structural constituent of ribosome"/>
    <property type="evidence" value="ECO:0007669"/>
    <property type="project" value="InterPro"/>
</dbReference>
<dbReference type="GO" id="GO:0000049">
    <property type="term" value="F:tRNA binding"/>
    <property type="evidence" value="ECO:0007669"/>
    <property type="project" value="UniProtKB-KW"/>
</dbReference>
<dbReference type="GO" id="GO:0006417">
    <property type="term" value="P:regulation of translation"/>
    <property type="evidence" value="ECO:0007669"/>
    <property type="project" value="UniProtKB-KW"/>
</dbReference>
<dbReference type="GO" id="GO:0006412">
    <property type="term" value="P:translation"/>
    <property type="evidence" value="ECO:0007669"/>
    <property type="project" value="UniProtKB-UniRule"/>
</dbReference>
<dbReference type="CDD" id="cd00403">
    <property type="entry name" value="Ribosomal_L1"/>
    <property type="match status" value="1"/>
</dbReference>
<dbReference type="FunFam" id="3.40.50.790:FF:000001">
    <property type="entry name" value="50S ribosomal protein L1"/>
    <property type="match status" value="1"/>
</dbReference>
<dbReference type="Gene3D" id="3.30.190.20">
    <property type="match status" value="1"/>
</dbReference>
<dbReference type="Gene3D" id="3.40.50.790">
    <property type="match status" value="1"/>
</dbReference>
<dbReference type="HAMAP" id="MF_01318_B">
    <property type="entry name" value="Ribosomal_uL1_B"/>
    <property type="match status" value="1"/>
</dbReference>
<dbReference type="InterPro" id="IPR005878">
    <property type="entry name" value="Ribosom_uL1_bac-type"/>
</dbReference>
<dbReference type="InterPro" id="IPR002143">
    <property type="entry name" value="Ribosomal_uL1"/>
</dbReference>
<dbReference type="InterPro" id="IPR023674">
    <property type="entry name" value="Ribosomal_uL1-like"/>
</dbReference>
<dbReference type="InterPro" id="IPR028364">
    <property type="entry name" value="Ribosomal_uL1/biogenesis"/>
</dbReference>
<dbReference type="InterPro" id="IPR016095">
    <property type="entry name" value="Ribosomal_uL1_3-a/b-sand"/>
</dbReference>
<dbReference type="InterPro" id="IPR023673">
    <property type="entry name" value="Ribosomal_uL1_CS"/>
</dbReference>
<dbReference type="NCBIfam" id="TIGR01169">
    <property type="entry name" value="rplA_bact"/>
    <property type="match status" value="1"/>
</dbReference>
<dbReference type="PANTHER" id="PTHR36427">
    <property type="entry name" value="54S RIBOSOMAL PROTEIN L1, MITOCHONDRIAL"/>
    <property type="match status" value="1"/>
</dbReference>
<dbReference type="PANTHER" id="PTHR36427:SF3">
    <property type="entry name" value="LARGE RIBOSOMAL SUBUNIT PROTEIN UL1M"/>
    <property type="match status" value="1"/>
</dbReference>
<dbReference type="Pfam" id="PF00687">
    <property type="entry name" value="Ribosomal_L1"/>
    <property type="match status" value="1"/>
</dbReference>
<dbReference type="PIRSF" id="PIRSF002155">
    <property type="entry name" value="Ribosomal_L1"/>
    <property type="match status" value="1"/>
</dbReference>
<dbReference type="SUPFAM" id="SSF56808">
    <property type="entry name" value="Ribosomal protein L1"/>
    <property type="match status" value="1"/>
</dbReference>
<dbReference type="PROSITE" id="PS01199">
    <property type="entry name" value="RIBOSOMAL_L1"/>
    <property type="match status" value="1"/>
</dbReference>
<reference key="1">
    <citation type="journal article" date="2005" name="J. Bacteriol.">
        <title>Whole-genome sequencing of Staphylococcus haemolyticus uncovers the extreme plasticity of its genome and the evolution of human-colonizing staphylococcal species.</title>
        <authorList>
            <person name="Takeuchi F."/>
            <person name="Watanabe S."/>
            <person name="Baba T."/>
            <person name="Yuzawa H."/>
            <person name="Ito T."/>
            <person name="Morimoto Y."/>
            <person name="Kuroda M."/>
            <person name="Cui L."/>
            <person name="Takahashi M."/>
            <person name="Ankai A."/>
            <person name="Baba S."/>
            <person name="Fukui S."/>
            <person name="Lee J.C."/>
            <person name="Hiramatsu K."/>
        </authorList>
    </citation>
    <scope>NUCLEOTIDE SEQUENCE [LARGE SCALE GENOMIC DNA]</scope>
    <source>
        <strain>JCSC1435</strain>
    </source>
</reference>
<gene>
    <name evidence="1" type="primary">rplA</name>
    <name type="ordered locus">SH2471</name>
</gene>
<name>RL1_STAHJ</name>
<organism>
    <name type="scientific">Staphylococcus haemolyticus (strain JCSC1435)</name>
    <dbReference type="NCBI Taxonomy" id="279808"/>
    <lineage>
        <taxon>Bacteria</taxon>
        <taxon>Bacillati</taxon>
        <taxon>Bacillota</taxon>
        <taxon>Bacilli</taxon>
        <taxon>Bacillales</taxon>
        <taxon>Staphylococcaceae</taxon>
        <taxon>Staphylococcus</taxon>
    </lineage>
</organism>
<proteinExistence type="inferred from homology"/>
<protein>
    <recommendedName>
        <fullName evidence="1">Large ribosomal subunit protein uL1</fullName>
    </recommendedName>
    <alternativeName>
        <fullName evidence="2">50S ribosomal protein L1</fullName>
    </alternativeName>
</protein>
<accession>Q4L3J7</accession>
<evidence type="ECO:0000255" key="1">
    <source>
        <dbReference type="HAMAP-Rule" id="MF_01318"/>
    </source>
</evidence>
<evidence type="ECO:0000305" key="2"/>
<sequence>MAKKGKKYQEAANKVDRTKHYSVEEAISLAKETSIANFDASVEVAFRLGIDTRKNDQQIRGAVVLPNGTGKSQRVLVFAKGDKITEAEEAGADYVGESEYVQKIQQGWFDFDVVVATPDMMGEVGKLGRVLGPKGLMPNPKTGTVTMDVKKAVEEIKAGKVEYRAEKAGIVHASIGKVSFSDEKLVENFKTLQDVLAKAKPSSAKGTYFKSVAVTTTMGPGVKIDTSSFKL</sequence>
<comment type="function">
    <text evidence="1">Binds directly to 23S rRNA. The L1 stalk is quite mobile in the ribosome, and is involved in E site tRNA release.</text>
</comment>
<comment type="function">
    <text evidence="1">Protein L1 is also a translational repressor protein, it controls the translation of the L11 operon by binding to its mRNA.</text>
</comment>
<comment type="subunit">
    <text evidence="1">Part of the 50S ribosomal subunit.</text>
</comment>
<comment type="similarity">
    <text evidence="1">Belongs to the universal ribosomal protein uL1 family.</text>
</comment>
<feature type="chain" id="PRO_0000125739" description="Large ribosomal subunit protein uL1">
    <location>
        <begin position="1"/>
        <end position="231"/>
    </location>
</feature>